<accession>Q03QY6</accession>
<name>ATPA_LEVBA</name>
<gene>
    <name evidence="1" type="primary">atpA</name>
    <name type="ordered locus">LVIS_1281</name>
</gene>
<protein>
    <recommendedName>
        <fullName evidence="1">ATP synthase subunit alpha</fullName>
        <ecNumber evidence="1">7.1.2.2</ecNumber>
    </recommendedName>
    <alternativeName>
        <fullName evidence="1">ATP synthase F1 sector subunit alpha</fullName>
    </alternativeName>
    <alternativeName>
        <fullName evidence="1">F-ATPase subunit alpha</fullName>
    </alternativeName>
</protein>
<keyword id="KW-0066">ATP synthesis</keyword>
<keyword id="KW-0067">ATP-binding</keyword>
<keyword id="KW-1003">Cell membrane</keyword>
<keyword id="KW-0139">CF(1)</keyword>
<keyword id="KW-0375">Hydrogen ion transport</keyword>
<keyword id="KW-0406">Ion transport</keyword>
<keyword id="KW-0472">Membrane</keyword>
<keyword id="KW-0547">Nucleotide-binding</keyword>
<keyword id="KW-1185">Reference proteome</keyword>
<keyword id="KW-1278">Translocase</keyword>
<keyword id="KW-0813">Transport</keyword>
<organism>
    <name type="scientific">Levilactobacillus brevis (strain ATCC 367 / BCRC 12310 / CIP 105137 / JCM 1170 / LMG 11437 / NCIMB 947 / NCTC 947)</name>
    <name type="common">Lactobacillus brevis</name>
    <dbReference type="NCBI Taxonomy" id="387344"/>
    <lineage>
        <taxon>Bacteria</taxon>
        <taxon>Bacillati</taxon>
        <taxon>Bacillota</taxon>
        <taxon>Bacilli</taxon>
        <taxon>Lactobacillales</taxon>
        <taxon>Lactobacillaceae</taxon>
        <taxon>Levilactobacillus</taxon>
    </lineage>
</organism>
<sequence length="513" mass="55315">MSIKAEEISALIKQQLESYQDEISVEETGTVTYVGDGVARAHGLNNALQGELLLFDNGVYGMVQNLEASDVGIVILGDFTGITEGDTVKRTGRIMEVPVGDQLIGRVVNPLGQAIDGKGDISTDKTRPIEHKAPGVMDRQGVSEPLQTGIKAIDALVPIGRGQRELIIGDRKTGKSSIAIDTIINQKDQDMICIYVAIGQKASTVRAQVSTLEKFGAMDYTIVVTASPSEPAPMLYIAPYAGAAMGEEFMHNGKHVLIVYDDLTKQADAYRELSLILRRAPGREAYPGDIFYTHSRLLERAAKLNDELGGGSMTALPVIETKAGDVSAYIPTNVISITDGQIFLNSDSFYSGVRPAMDAGTSVSRVGGDAQIKAMKKVAGTLRLDLSAYKELESFAQFGSDLDAATQARLARGERTVEVLKQGLHESVPVAKEVIILFALTHGHLDKLEVADVLRYQNELFDYMDASHKDLEDSITTTGNLPEGNTLEDAIKEFDGMFQPTAKADDTAAQTAD</sequence>
<comment type="function">
    <text evidence="1">Produces ATP from ADP in the presence of a proton gradient across the membrane. The alpha chain is a regulatory subunit.</text>
</comment>
<comment type="catalytic activity">
    <reaction evidence="1">
        <text>ATP + H2O + 4 H(+)(in) = ADP + phosphate + 5 H(+)(out)</text>
        <dbReference type="Rhea" id="RHEA:57720"/>
        <dbReference type="ChEBI" id="CHEBI:15377"/>
        <dbReference type="ChEBI" id="CHEBI:15378"/>
        <dbReference type="ChEBI" id="CHEBI:30616"/>
        <dbReference type="ChEBI" id="CHEBI:43474"/>
        <dbReference type="ChEBI" id="CHEBI:456216"/>
        <dbReference type="EC" id="7.1.2.2"/>
    </reaction>
</comment>
<comment type="subunit">
    <text evidence="1">F-type ATPases have 2 components, CF(1) - the catalytic core - and CF(0) - the membrane proton channel. CF(1) has five subunits: alpha(3), beta(3), gamma(1), delta(1), epsilon(1). CF(0) has three main subunits: a(1), b(2) and c(9-12). The alpha and beta chains form an alternating ring which encloses part of the gamma chain. CF(1) is attached to CF(0) by a central stalk formed by the gamma and epsilon chains, while a peripheral stalk is formed by the delta and b chains.</text>
</comment>
<comment type="subcellular location">
    <subcellularLocation>
        <location evidence="1">Cell membrane</location>
        <topology evidence="1">Peripheral membrane protein</topology>
    </subcellularLocation>
</comment>
<comment type="similarity">
    <text evidence="1">Belongs to the ATPase alpha/beta chains family.</text>
</comment>
<proteinExistence type="inferred from homology"/>
<evidence type="ECO:0000255" key="1">
    <source>
        <dbReference type="HAMAP-Rule" id="MF_01346"/>
    </source>
</evidence>
<dbReference type="EC" id="7.1.2.2" evidence="1"/>
<dbReference type="EMBL" id="CP000416">
    <property type="protein sequence ID" value="ABJ64386.1"/>
    <property type="molecule type" value="Genomic_DNA"/>
</dbReference>
<dbReference type="RefSeq" id="WP_011668150.1">
    <property type="nucleotide sequence ID" value="NC_008497.1"/>
</dbReference>
<dbReference type="SMR" id="Q03QY6"/>
<dbReference type="STRING" id="387344.LVIS_1281"/>
<dbReference type="KEGG" id="lbr:LVIS_1281"/>
<dbReference type="eggNOG" id="COG0056">
    <property type="taxonomic scope" value="Bacteria"/>
</dbReference>
<dbReference type="HOGENOM" id="CLU_010091_2_1_9"/>
<dbReference type="Proteomes" id="UP000001652">
    <property type="component" value="Chromosome"/>
</dbReference>
<dbReference type="GO" id="GO:0005886">
    <property type="term" value="C:plasma membrane"/>
    <property type="evidence" value="ECO:0007669"/>
    <property type="project" value="UniProtKB-SubCell"/>
</dbReference>
<dbReference type="GO" id="GO:0045259">
    <property type="term" value="C:proton-transporting ATP synthase complex"/>
    <property type="evidence" value="ECO:0007669"/>
    <property type="project" value="UniProtKB-KW"/>
</dbReference>
<dbReference type="GO" id="GO:0043531">
    <property type="term" value="F:ADP binding"/>
    <property type="evidence" value="ECO:0007669"/>
    <property type="project" value="TreeGrafter"/>
</dbReference>
<dbReference type="GO" id="GO:0005524">
    <property type="term" value="F:ATP binding"/>
    <property type="evidence" value="ECO:0007669"/>
    <property type="project" value="UniProtKB-UniRule"/>
</dbReference>
<dbReference type="GO" id="GO:0046933">
    <property type="term" value="F:proton-transporting ATP synthase activity, rotational mechanism"/>
    <property type="evidence" value="ECO:0007669"/>
    <property type="project" value="UniProtKB-UniRule"/>
</dbReference>
<dbReference type="CDD" id="cd18113">
    <property type="entry name" value="ATP-synt_F1_alpha_C"/>
    <property type="match status" value="1"/>
</dbReference>
<dbReference type="CDD" id="cd18116">
    <property type="entry name" value="ATP-synt_F1_alpha_N"/>
    <property type="match status" value="1"/>
</dbReference>
<dbReference type="CDD" id="cd01132">
    <property type="entry name" value="F1-ATPase_alpha_CD"/>
    <property type="match status" value="1"/>
</dbReference>
<dbReference type="FunFam" id="1.20.150.20:FF:000001">
    <property type="entry name" value="ATP synthase subunit alpha"/>
    <property type="match status" value="1"/>
</dbReference>
<dbReference type="FunFam" id="2.40.30.20:FF:000001">
    <property type="entry name" value="ATP synthase subunit alpha"/>
    <property type="match status" value="1"/>
</dbReference>
<dbReference type="FunFam" id="3.40.50.300:FF:000002">
    <property type="entry name" value="ATP synthase subunit alpha"/>
    <property type="match status" value="1"/>
</dbReference>
<dbReference type="Gene3D" id="2.40.30.20">
    <property type="match status" value="1"/>
</dbReference>
<dbReference type="Gene3D" id="1.20.150.20">
    <property type="entry name" value="ATP synthase alpha/beta chain, C-terminal domain"/>
    <property type="match status" value="1"/>
</dbReference>
<dbReference type="Gene3D" id="3.40.50.300">
    <property type="entry name" value="P-loop containing nucleotide triphosphate hydrolases"/>
    <property type="match status" value="1"/>
</dbReference>
<dbReference type="HAMAP" id="MF_01346">
    <property type="entry name" value="ATP_synth_alpha_bact"/>
    <property type="match status" value="1"/>
</dbReference>
<dbReference type="InterPro" id="IPR023366">
    <property type="entry name" value="ATP_synth_asu-like_sf"/>
</dbReference>
<dbReference type="InterPro" id="IPR000793">
    <property type="entry name" value="ATP_synth_asu_C"/>
</dbReference>
<dbReference type="InterPro" id="IPR038376">
    <property type="entry name" value="ATP_synth_asu_C_sf"/>
</dbReference>
<dbReference type="InterPro" id="IPR033732">
    <property type="entry name" value="ATP_synth_F1_a_nt-bd_dom"/>
</dbReference>
<dbReference type="InterPro" id="IPR005294">
    <property type="entry name" value="ATP_synth_F1_asu"/>
</dbReference>
<dbReference type="InterPro" id="IPR004100">
    <property type="entry name" value="ATPase_F1/V1/A1_a/bsu_N"/>
</dbReference>
<dbReference type="InterPro" id="IPR036121">
    <property type="entry name" value="ATPase_F1/V1/A1_a/bsu_N_sf"/>
</dbReference>
<dbReference type="InterPro" id="IPR000194">
    <property type="entry name" value="ATPase_F1/V1/A1_a/bsu_nucl-bd"/>
</dbReference>
<dbReference type="InterPro" id="IPR027417">
    <property type="entry name" value="P-loop_NTPase"/>
</dbReference>
<dbReference type="NCBIfam" id="TIGR00962">
    <property type="entry name" value="atpA"/>
    <property type="match status" value="1"/>
</dbReference>
<dbReference type="NCBIfam" id="NF009884">
    <property type="entry name" value="PRK13343.1"/>
    <property type="match status" value="1"/>
</dbReference>
<dbReference type="PANTHER" id="PTHR48082">
    <property type="entry name" value="ATP SYNTHASE SUBUNIT ALPHA, MITOCHONDRIAL"/>
    <property type="match status" value="1"/>
</dbReference>
<dbReference type="PANTHER" id="PTHR48082:SF2">
    <property type="entry name" value="ATP SYNTHASE SUBUNIT ALPHA, MITOCHONDRIAL"/>
    <property type="match status" value="1"/>
</dbReference>
<dbReference type="Pfam" id="PF00006">
    <property type="entry name" value="ATP-synt_ab"/>
    <property type="match status" value="1"/>
</dbReference>
<dbReference type="Pfam" id="PF00306">
    <property type="entry name" value="ATP-synt_ab_C"/>
    <property type="match status" value="1"/>
</dbReference>
<dbReference type="Pfam" id="PF02874">
    <property type="entry name" value="ATP-synt_ab_N"/>
    <property type="match status" value="1"/>
</dbReference>
<dbReference type="SUPFAM" id="SSF47917">
    <property type="entry name" value="C-terminal domain of alpha and beta subunits of F1 ATP synthase"/>
    <property type="match status" value="1"/>
</dbReference>
<dbReference type="SUPFAM" id="SSF50615">
    <property type="entry name" value="N-terminal domain of alpha and beta subunits of F1 ATP synthase"/>
    <property type="match status" value="1"/>
</dbReference>
<dbReference type="SUPFAM" id="SSF52540">
    <property type="entry name" value="P-loop containing nucleoside triphosphate hydrolases"/>
    <property type="match status" value="1"/>
</dbReference>
<reference key="1">
    <citation type="journal article" date="2006" name="Proc. Natl. Acad. Sci. U.S.A.">
        <title>Comparative genomics of the lactic acid bacteria.</title>
        <authorList>
            <person name="Makarova K.S."/>
            <person name="Slesarev A."/>
            <person name="Wolf Y.I."/>
            <person name="Sorokin A."/>
            <person name="Mirkin B."/>
            <person name="Koonin E.V."/>
            <person name="Pavlov A."/>
            <person name="Pavlova N."/>
            <person name="Karamychev V."/>
            <person name="Polouchine N."/>
            <person name="Shakhova V."/>
            <person name="Grigoriev I."/>
            <person name="Lou Y."/>
            <person name="Rohksar D."/>
            <person name="Lucas S."/>
            <person name="Huang K."/>
            <person name="Goodstein D.M."/>
            <person name="Hawkins T."/>
            <person name="Plengvidhya V."/>
            <person name="Welker D."/>
            <person name="Hughes J."/>
            <person name="Goh Y."/>
            <person name="Benson A."/>
            <person name="Baldwin K."/>
            <person name="Lee J.-H."/>
            <person name="Diaz-Muniz I."/>
            <person name="Dosti B."/>
            <person name="Smeianov V."/>
            <person name="Wechter W."/>
            <person name="Barabote R."/>
            <person name="Lorca G."/>
            <person name="Altermann E."/>
            <person name="Barrangou R."/>
            <person name="Ganesan B."/>
            <person name="Xie Y."/>
            <person name="Rawsthorne H."/>
            <person name="Tamir D."/>
            <person name="Parker C."/>
            <person name="Breidt F."/>
            <person name="Broadbent J.R."/>
            <person name="Hutkins R."/>
            <person name="O'Sullivan D."/>
            <person name="Steele J."/>
            <person name="Unlu G."/>
            <person name="Saier M.H. Jr."/>
            <person name="Klaenhammer T."/>
            <person name="Richardson P."/>
            <person name="Kozyavkin S."/>
            <person name="Weimer B.C."/>
            <person name="Mills D.A."/>
        </authorList>
    </citation>
    <scope>NUCLEOTIDE SEQUENCE [LARGE SCALE GENOMIC DNA]</scope>
    <source>
        <strain>ATCC 367 / BCRC 12310 / CIP 105137 / JCM 1170 / LMG 11437 / NCIMB 947 / NCTC 947</strain>
    </source>
</reference>
<feature type="chain" id="PRO_0000302658" description="ATP synthase subunit alpha">
    <location>
        <begin position="1"/>
        <end position="513"/>
    </location>
</feature>
<feature type="binding site" evidence="1">
    <location>
        <begin position="169"/>
        <end position="176"/>
    </location>
    <ligand>
        <name>ATP</name>
        <dbReference type="ChEBI" id="CHEBI:30616"/>
    </ligand>
</feature>
<feature type="site" description="Required for activity" evidence="1">
    <location>
        <position position="362"/>
    </location>
</feature>